<reference key="1">
    <citation type="submission" date="2007-04" db="EMBL/GenBank/DDBJ databases">
        <title>Complete sequence of chromosome of Mycobacterium gilvum PYR-GCK.</title>
        <authorList>
            <consortium name="US DOE Joint Genome Institute"/>
            <person name="Copeland A."/>
            <person name="Lucas S."/>
            <person name="Lapidus A."/>
            <person name="Barry K."/>
            <person name="Detter J.C."/>
            <person name="Glavina del Rio T."/>
            <person name="Hammon N."/>
            <person name="Israni S."/>
            <person name="Dalin E."/>
            <person name="Tice H."/>
            <person name="Pitluck S."/>
            <person name="Chain P."/>
            <person name="Malfatti S."/>
            <person name="Shin M."/>
            <person name="Vergez L."/>
            <person name="Schmutz J."/>
            <person name="Larimer F."/>
            <person name="Land M."/>
            <person name="Hauser L."/>
            <person name="Kyrpides N."/>
            <person name="Mikhailova N."/>
            <person name="Miller C."/>
            <person name="Richardson P."/>
        </authorList>
    </citation>
    <scope>NUCLEOTIDE SEQUENCE [LARGE SCALE GENOMIC DNA]</scope>
    <source>
        <strain>PYR-GCK</strain>
    </source>
</reference>
<evidence type="ECO:0000255" key="1">
    <source>
        <dbReference type="HAMAP-Rule" id="MF_00456"/>
    </source>
</evidence>
<sequence length="370" mass="38743">MSVHRDAIRGARSVVVKIGTTALTTPSGVFDRGRLHYLADAIEARMKAGSDVVIVSSGAIAAGIEPLKLTKRPADLATKQAAASVGQVALVNSWSAAFGRYDRTVGQVLLTAHDISMRVQHNNAQRTLDRLRALHAVAIVNENDTVATNEIRFGDNDRLSALVAHLVGADALILLSDIDGLYDGDPRKAPEDNPARFISEVSGPDDLADVTAGRGSHLGTGGMVSKLSSALLAADAGVPVLLAAAADAASALGDASVGTVFAPRPERMSARRFWVRYAAEASGTLTLDDGAVRAVVQQRRSLLPAGISAVSGRFFGGDVVELRDQENAMVARGVVAYDKAELATMLGRSTSDLPAEMRRPAVHADDLVAV</sequence>
<comment type="function">
    <text evidence="1">Catalyzes the transfer of a phosphate group to glutamate to form L-glutamate 5-phosphate.</text>
</comment>
<comment type="catalytic activity">
    <reaction evidence="1">
        <text>L-glutamate + ATP = L-glutamyl 5-phosphate + ADP</text>
        <dbReference type="Rhea" id="RHEA:14877"/>
        <dbReference type="ChEBI" id="CHEBI:29985"/>
        <dbReference type="ChEBI" id="CHEBI:30616"/>
        <dbReference type="ChEBI" id="CHEBI:58274"/>
        <dbReference type="ChEBI" id="CHEBI:456216"/>
        <dbReference type="EC" id="2.7.2.11"/>
    </reaction>
</comment>
<comment type="pathway">
    <text evidence="1">Amino-acid biosynthesis; L-proline biosynthesis; L-glutamate 5-semialdehyde from L-glutamate: step 1/2.</text>
</comment>
<comment type="subcellular location">
    <subcellularLocation>
        <location evidence="1">Cytoplasm</location>
    </subcellularLocation>
</comment>
<comment type="similarity">
    <text evidence="1">Belongs to the glutamate 5-kinase family.</text>
</comment>
<name>PROB_MYCGI</name>
<accession>A4T2J5</accession>
<gene>
    <name evidence="1" type="primary">proB</name>
    <name type="ordered locus">Mflv_2638</name>
</gene>
<organism>
    <name type="scientific">Mycolicibacterium gilvum (strain PYR-GCK)</name>
    <name type="common">Mycobacterium gilvum (strain PYR-GCK)</name>
    <dbReference type="NCBI Taxonomy" id="350054"/>
    <lineage>
        <taxon>Bacteria</taxon>
        <taxon>Bacillati</taxon>
        <taxon>Actinomycetota</taxon>
        <taxon>Actinomycetes</taxon>
        <taxon>Mycobacteriales</taxon>
        <taxon>Mycobacteriaceae</taxon>
        <taxon>Mycolicibacterium</taxon>
    </lineage>
</organism>
<dbReference type="EC" id="2.7.2.11" evidence="1"/>
<dbReference type="EMBL" id="CP000656">
    <property type="protein sequence ID" value="ABP45115.1"/>
    <property type="molecule type" value="Genomic_DNA"/>
</dbReference>
<dbReference type="SMR" id="A4T2J5"/>
<dbReference type="STRING" id="350054.Mflv_2638"/>
<dbReference type="KEGG" id="mgi:Mflv_2638"/>
<dbReference type="eggNOG" id="COG0263">
    <property type="taxonomic scope" value="Bacteria"/>
</dbReference>
<dbReference type="HOGENOM" id="CLU_025400_2_0_11"/>
<dbReference type="OrthoDB" id="9804434at2"/>
<dbReference type="UniPathway" id="UPA00098">
    <property type="reaction ID" value="UER00359"/>
</dbReference>
<dbReference type="GO" id="GO:0005829">
    <property type="term" value="C:cytosol"/>
    <property type="evidence" value="ECO:0007669"/>
    <property type="project" value="TreeGrafter"/>
</dbReference>
<dbReference type="GO" id="GO:0005524">
    <property type="term" value="F:ATP binding"/>
    <property type="evidence" value="ECO:0007669"/>
    <property type="project" value="UniProtKB-KW"/>
</dbReference>
<dbReference type="GO" id="GO:0004349">
    <property type="term" value="F:glutamate 5-kinase activity"/>
    <property type="evidence" value="ECO:0007669"/>
    <property type="project" value="UniProtKB-UniRule"/>
</dbReference>
<dbReference type="GO" id="GO:0003723">
    <property type="term" value="F:RNA binding"/>
    <property type="evidence" value="ECO:0007669"/>
    <property type="project" value="InterPro"/>
</dbReference>
<dbReference type="GO" id="GO:0055129">
    <property type="term" value="P:L-proline biosynthetic process"/>
    <property type="evidence" value="ECO:0007669"/>
    <property type="project" value="UniProtKB-UniRule"/>
</dbReference>
<dbReference type="CDD" id="cd04242">
    <property type="entry name" value="AAK_G5K_ProB"/>
    <property type="match status" value="1"/>
</dbReference>
<dbReference type="CDD" id="cd21157">
    <property type="entry name" value="PUA_G5K"/>
    <property type="match status" value="1"/>
</dbReference>
<dbReference type="FunFam" id="3.40.1160.10:FF:000018">
    <property type="entry name" value="Glutamate 5-kinase"/>
    <property type="match status" value="1"/>
</dbReference>
<dbReference type="Gene3D" id="3.40.1160.10">
    <property type="entry name" value="Acetylglutamate kinase-like"/>
    <property type="match status" value="1"/>
</dbReference>
<dbReference type="Gene3D" id="2.30.130.10">
    <property type="entry name" value="PUA domain"/>
    <property type="match status" value="1"/>
</dbReference>
<dbReference type="HAMAP" id="MF_00456">
    <property type="entry name" value="ProB"/>
    <property type="match status" value="1"/>
</dbReference>
<dbReference type="InterPro" id="IPR036393">
    <property type="entry name" value="AceGlu_kinase-like_sf"/>
</dbReference>
<dbReference type="InterPro" id="IPR001048">
    <property type="entry name" value="Asp/Glu/Uridylate_kinase"/>
</dbReference>
<dbReference type="InterPro" id="IPR041739">
    <property type="entry name" value="G5K_ProB"/>
</dbReference>
<dbReference type="InterPro" id="IPR001057">
    <property type="entry name" value="Glu/AcGlu_kinase"/>
</dbReference>
<dbReference type="InterPro" id="IPR011529">
    <property type="entry name" value="Glu_5kinase"/>
</dbReference>
<dbReference type="InterPro" id="IPR005715">
    <property type="entry name" value="Glu_5kinase/COase_Synthase"/>
</dbReference>
<dbReference type="InterPro" id="IPR019797">
    <property type="entry name" value="Glutamate_5-kinase_CS"/>
</dbReference>
<dbReference type="InterPro" id="IPR002478">
    <property type="entry name" value="PUA"/>
</dbReference>
<dbReference type="InterPro" id="IPR015947">
    <property type="entry name" value="PUA-like_sf"/>
</dbReference>
<dbReference type="InterPro" id="IPR036974">
    <property type="entry name" value="PUA_sf"/>
</dbReference>
<dbReference type="NCBIfam" id="TIGR01027">
    <property type="entry name" value="proB"/>
    <property type="match status" value="1"/>
</dbReference>
<dbReference type="PANTHER" id="PTHR43654">
    <property type="entry name" value="GLUTAMATE 5-KINASE"/>
    <property type="match status" value="1"/>
</dbReference>
<dbReference type="PANTHER" id="PTHR43654:SF1">
    <property type="entry name" value="ISOPENTENYL PHOSPHATE KINASE"/>
    <property type="match status" value="1"/>
</dbReference>
<dbReference type="Pfam" id="PF00696">
    <property type="entry name" value="AA_kinase"/>
    <property type="match status" value="1"/>
</dbReference>
<dbReference type="Pfam" id="PF01472">
    <property type="entry name" value="PUA"/>
    <property type="match status" value="1"/>
</dbReference>
<dbReference type="PIRSF" id="PIRSF000729">
    <property type="entry name" value="GK"/>
    <property type="match status" value="1"/>
</dbReference>
<dbReference type="PRINTS" id="PR00474">
    <property type="entry name" value="GLU5KINASE"/>
</dbReference>
<dbReference type="SMART" id="SM00359">
    <property type="entry name" value="PUA"/>
    <property type="match status" value="1"/>
</dbReference>
<dbReference type="SUPFAM" id="SSF53633">
    <property type="entry name" value="Carbamate kinase-like"/>
    <property type="match status" value="1"/>
</dbReference>
<dbReference type="SUPFAM" id="SSF88697">
    <property type="entry name" value="PUA domain-like"/>
    <property type="match status" value="1"/>
</dbReference>
<dbReference type="PROSITE" id="PS00902">
    <property type="entry name" value="GLUTAMATE_5_KINASE"/>
    <property type="match status" value="1"/>
</dbReference>
<dbReference type="PROSITE" id="PS50890">
    <property type="entry name" value="PUA"/>
    <property type="match status" value="1"/>
</dbReference>
<protein>
    <recommendedName>
        <fullName evidence="1">Glutamate 5-kinase</fullName>
        <ecNumber evidence="1">2.7.2.11</ecNumber>
    </recommendedName>
    <alternativeName>
        <fullName evidence="1">Gamma-glutamyl kinase</fullName>
        <shortName evidence="1">GK</shortName>
    </alternativeName>
</protein>
<proteinExistence type="inferred from homology"/>
<keyword id="KW-0028">Amino-acid biosynthesis</keyword>
<keyword id="KW-0067">ATP-binding</keyword>
<keyword id="KW-0963">Cytoplasm</keyword>
<keyword id="KW-0418">Kinase</keyword>
<keyword id="KW-0547">Nucleotide-binding</keyword>
<keyword id="KW-0641">Proline biosynthesis</keyword>
<keyword id="KW-0808">Transferase</keyword>
<feature type="chain" id="PRO_1000081075" description="Glutamate 5-kinase">
    <location>
        <begin position="1"/>
        <end position="370"/>
    </location>
</feature>
<feature type="domain" description="PUA" evidence="1">
    <location>
        <begin position="282"/>
        <end position="360"/>
    </location>
</feature>
<feature type="binding site" evidence="1">
    <location>
        <position position="17"/>
    </location>
    <ligand>
        <name>ATP</name>
        <dbReference type="ChEBI" id="CHEBI:30616"/>
    </ligand>
</feature>
<feature type="binding site" evidence="1">
    <location>
        <position position="57"/>
    </location>
    <ligand>
        <name>substrate</name>
    </ligand>
</feature>
<feature type="binding site" evidence="1">
    <location>
        <position position="144"/>
    </location>
    <ligand>
        <name>substrate</name>
    </ligand>
</feature>
<feature type="binding site" evidence="1">
    <location>
        <position position="156"/>
    </location>
    <ligand>
        <name>substrate</name>
    </ligand>
</feature>
<feature type="binding site" evidence="1">
    <location>
        <begin position="176"/>
        <end position="177"/>
    </location>
    <ligand>
        <name>ATP</name>
        <dbReference type="ChEBI" id="CHEBI:30616"/>
    </ligand>
</feature>
<feature type="binding site" evidence="1">
    <location>
        <begin position="220"/>
        <end position="226"/>
    </location>
    <ligand>
        <name>ATP</name>
        <dbReference type="ChEBI" id="CHEBI:30616"/>
    </ligand>
</feature>